<evidence type="ECO:0000255" key="1"/>
<evidence type="ECO:0000305" key="2"/>
<gene>
    <name type="primary">YCL012C</name>
</gene>
<name>YCB2_SACBA</name>
<comment type="similarity">
    <text evidence="2">Belongs to the UPF0357 family.</text>
</comment>
<reference key="1">
    <citation type="journal article" date="2003" name="Yeast">
        <title>Verification of a new gene on Saccharomyces cerevisiae chromosome III.</title>
        <authorList>
            <person name="Zhang Z."/>
            <person name="Dietrich F.S."/>
        </authorList>
    </citation>
    <scope>NUCLEOTIDE SEQUENCE [GENOMIC DNA]</scope>
    <source>
        <strain>YJM 544</strain>
    </source>
</reference>
<sequence>MWDLFYFKVFFWVVLISLCIFMVHRNGKVANKFRELRSRFQSRFNRHISLNDSFTDDLESGLHSSNFDIISENNNDTRGGLDDISKNEIKQIMEMNNISFDKARLLYMERKFGQNGIAPDGTPIDPKAFTFD</sequence>
<keyword id="KW-0732">Signal</keyword>
<organism>
    <name type="scientific">Saccharomyces bayanus</name>
    <name type="common">Yeast</name>
    <name type="synonym">Saccharomyces uvarum x Saccharomyces eubayanus</name>
    <dbReference type="NCBI Taxonomy" id="4931"/>
    <lineage>
        <taxon>Eukaryota</taxon>
        <taxon>Fungi</taxon>
        <taxon>Dikarya</taxon>
        <taxon>Ascomycota</taxon>
        <taxon>Saccharomycotina</taxon>
        <taxon>Saccharomycetes</taxon>
        <taxon>Saccharomycetales</taxon>
        <taxon>Saccharomycetaceae</taxon>
        <taxon>Saccharomyces</taxon>
    </lineage>
</organism>
<protein>
    <recommendedName>
        <fullName>UPF0357 protein YCL012C</fullName>
    </recommendedName>
</protein>
<accession>Q8J0M6</accession>
<proteinExistence type="inferred from homology"/>
<dbReference type="EMBL" id="AY178909">
    <property type="protein sequence ID" value="AAN86068.1"/>
    <property type="molecule type" value="Genomic_DNA"/>
</dbReference>
<dbReference type="SMR" id="Q8J0M6"/>
<dbReference type="InterPro" id="IPR018559">
    <property type="entry name" value="DUF2015"/>
</dbReference>
<dbReference type="PANTHER" id="PTHR28023">
    <property type="entry name" value="UPF0357 PROTEIN YCL012C"/>
    <property type="match status" value="1"/>
</dbReference>
<dbReference type="PANTHER" id="PTHR28023:SF1">
    <property type="entry name" value="UPF0357 PROTEIN YCL012C"/>
    <property type="match status" value="1"/>
</dbReference>
<dbReference type="Pfam" id="PF09435">
    <property type="entry name" value="DUF2015"/>
    <property type="match status" value="1"/>
</dbReference>
<feature type="signal peptide" evidence="1">
    <location>
        <begin position="1"/>
        <end position="25"/>
    </location>
</feature>
<feature type="chain" id="PRO_0000045283" description="UPF0357 protein YCL012C">
    <location>
        <begin position="26"/>
        <end position="132"/>
    </location>
</feature>